<dbReference type="EMBL" id="GQ331927">
    <property type="protein sequence ID" value="ACX37125.1"/>
    <property type="molecule type" value="Genomic_DNA"/>
</dbReference>
<dbReference type="EMBL" id="GQ331928">
    <property type="protein sequence ID" value="ACX37126.1"/>
    <property type="molecule type" value="Genomic_DNA"/>
</dbReference>
<dbReference type="EMBL" id="GQ331929">
    <property type="protein sequence ID" value="ACX37127.1"/>
    <property type="molecule type" value="Genomic_DNA"/>
</dbReference>
<dbReference type="EMBL" id="CM000130">
    <property type="protein sequence ID" value="EEC78982.1"/>
    <property type="molecule type" value="Genomic_DNA"/>
</dbReference>
<dbReference type="EMBL" id="BK005048">
    <property type="protein sequence ID" value="DAA05110.1"/>
    <property type="molecule type" value="Genomic_DNA"/>
</dbReference>
<dbReference type="EMBL" id="DQ298181">
    <property type="protein sequence ID" value="ABC02809.1"/>
    <property type="molecule type" value="mRNA"/>
</dbReference>
<dbReference type="SMR" id="B8AWM1"/>
<dbReference type="EnsemblPlants" id="BGIOSGA019621-TA">
    <property type="protein sequence ID" value="BGIOSGA019621-PA"/>
    <property type="gene ID" value="BGIOSGA019621"/>
</dbReference>
<dbReference type="EnsemblPlants" id="OsGoSa_05g0011770.01">
    <property type="protein sequence ID" value="OsGoSa_05g0011770.01"/>
    <property type="gene ID" value="OsGoSa_05g0011770"/>
</dbReference>
<dbReference type="EnsemblPlants" id="OsLima_05g0011730.01">
    <property type="protein sequence ID" value="OsLima_05g0011730.01"/>
    <property type="gene ID" value="OsLima_05g0011730"/>
</dbReference>
<dbReference type="EnsemblPlants" id="OsLiXu_05g0011780.01">
    <property type="protein sequence ID" value="OsLiXu_05g0011780.01"/>
    <property type="gene ID" value="OsLiXu_05g0011780"/>
</dbReference>
<dbReference type="EnsemblPlants" id="OsMH63_05G011770_01">
    <property type="protein sequence ID" value="OsMH63_05G011770_01"/>
    <property type="gene ID" value="OsMH63_05G011770"/>
</dbReference>
<dbReference type="EnsemblPlants" id="OsZS97_05G011840_01">
    <property type="protein sequence ID" value="OsZS97_05G011840_01"/>
    <property type="gene ID" value="OsZS97_05G011840"/>
</dbReference>
<dbReference type="Gramene" id="BGIOSGA019621-TA">
    <property type="protein sequence ID" value="BGIOSGA019621-PA"/>
    <property type="gene ID" value="BGIOSGA019621"/>
</dbReference>
<dbReference type="Gramene" id="OsGoSa_05g0011770.01">
    <property type="protein sequence ID" value="OsGoSa_05g0011770.01"/>
    <property type="gene ID" value="OsGoSa_05g0011770"/>
</dbReference>
<dbReference type="Gramene" id="OsLima_05g0011730.01">
    <property type="protein sequence ID" value="OsLima_05g0011730.01"/>
    <property type="gene ID" value="OsLima_05g0011730"/>
</dbReference>
<dbReference type="Gramene" id="OsLiXu_05g0011780.01">
    <property type="protein sequence ID" value="OsLiXu_05g0011780.01"/>
    <property type="gene ID" value="OsLiXu_05g0011780"/>
</dbReference>
<dbReference type="Gramene" id="OsMH63_05G011770_01">
    <property type="protein sequence ID" value="OsMH63_05G011770_01"/>
    <property type="gene ID" value="OsMH63_05G011770"/>
</dbReference>
<dbReference type="Gramene" id="OsZS97_05G011840_01">
    <property type="protein sequence ID" value="OsZS97_05G011840_01"/>
    <property type="gene ID" value="OsZS97_05G011840"/>
</dbReference>
<dbReference type="HOGENOM" id="CLU_071943_0_0_1"/>
<dbReference type="OMA" id="NRKANCR"/>
<dbReference type="OrthoDB" id="2021064at2759"/>
<dbReference type="Proteomes" id="UP000007015">
    <property type="component" value="Chromosome 5"/>
</dbReference>
<dbReference type="GO" id="GO:0005634">
    <property type="term" value="C:nucleus"/>
    <property type="evidence" value="ECO:0007669"/>
    <property type="project" value="UniProtKB-SubCell"/>
</dbReference>
<dbReference type="GO" id="GO:0003700">
    <property type="term" value="F:DNA-binding transcription factor activity"/>
    <property type="evidence" value="ECO:0007669"/>
    <property type="project" value="EnsemblPlants"/>
</dbReference>
<dbReference type="GO" id="GO:0043565">
    <property type="term" value="F:sequence-specific DNA binding"/>
    <property type="evidence" value="ECO:0007669"/>
    <property type="project" value="EnsemblPlants"/>
</dbReference>
<dbReference type="GO" id="GO:0006952">
    <property type="term" value="P:defense response"/>
    <property type="evidence" value="ECO:0007669"/>
    <property type="project" value="UniProtKB-KW"/>
</dbReference>
<dbReference type="GO" id="GO:0009788">
    <property type="term" value="P:negative regulation of abscisic acid-activated signaling pathway"/>
    <property type="evidence" value="ECO:0007669"/>
    <property type="project" value="EnsemblPlants"/>
</dbReference>
<dbReference type="GO" id="GO:1900425">
    <property type="term" value="P:negative regulation of defense response to bacterium"/>
    <property type="evidence" value="ECO:0007669"/>
    <property type="project" value="EnsemblPlants"/>
</dbReference>
<dbReference type="GO" id="GO:0080148">
    <property type="term" value="P:negative regulation of response to water deprivation"/>
    <property type="evidence" value="ECO:0007669"/>
    <property type="project" value="EnsemblPlants"/>
</dbReference>
<dbReference type="GO" id="GO:0080151">
    <property type="term" value="P:positive regulation of salicylic acid mediated signaling pathway"/>
    <property type="evidence" value="ECO:0007669"/>
    <property type="project" value="EnsemblPlants"/>
</dbReference>
<dbReference type="GO" id="GO:1900150">
    <property type="term" value="P:regulation of defense response to fungus"/>
    <property type="evidence" value="ECO:0007669"/>
    <property type="project" value="EnsemblPlants"/>
</dbReference>
<dbReference type="GO" id="GO:0009409">
    <property type="term" value="P:response to cold"/>
    <property type="evidence" value="ECO:0007669"/>
    <property type="project" value="EnsemblPlants"/>
</dbReference>
<dbReference type="Gene3D" id="2.20.25.80">
    <property type="entry name" value="WRKY domain"/>
    <property type="match status" value="1"/>
</dbReference>
<dbReference type="InterPro" id="IPR003657">
    <property type="entry name" value="WRKY_dom"/>
</dbReference>
<dbReference type="InterPro" id="IPR036576">
    <property type="entry name" value="WRKY_dom_sf"/>
</dbReference>
<dbReference type="InterPro" id="IPR044810">
    <property type="entry name" value="WRKY_plant"/>
</dbReference>
<dbReference type="PANTHER" id="PTHR31282">
    <property type="entry name" value="WRKY TRANSCRIPTION FACTOR 21-RELATED"/>
    <property type="match status" value="1"/>
</dbReference>
<dbReference type="Pfam" id="PF03106">
    <property type="entry name" value="WRKY"/>
    <property type="match status" value="1"/>
</dbReference>
<dbReference type="SMART" id="SM00774">
    <property type="entry name" value="WRKY"/>
    <property type="match status" value="1"/>
</dbReference>
<dbReference type="SUPFAM" id="SSF118290">
    <property type="entry name" value="WRKY DNA-binding domain"/>
    <property type="match status" value="1"/>
</dbReference>
<dbReference type="PROSITE" id="PS50811">
    <property type="entry name" value="WRKY"/>
    <property type="match status" value="1"/>
</dbReference>
<comment type="function">
    <text evidence="5 6">Transcriptional activator involved in defense responses against pathogens (PubMed:19700558). Acts as a positive regulator of defense responses against the rice blast fungus Magnaporthe oryzae (PubMed:19700558). Acts as a positive regulator of defense responses against the bacterial blight Xanthomonas oryzae pv oryzae (Xoo) and the bacterial streak Xanthomonas oryzae pv oryzicola (Xoc) (PubMed:19700558). Acts as a positive regulator of abscisic acid (ABA) signaling that suppresses growth of seedlings (PubMed:21725029). Acts as a negative regulator of salt stress response (PubMed:21725029). Acts as a negative regulator of cold stress response (PubMed:21725029). Acts as a negative regulator of drought stress response (PubMed:21725029).</text>
</comment>
<comment type="subcellular location">
    <subcellularLocation>
        <location evidence="1">Nucleus</location>
    </subcellularLocation>
</comment>
<comment type="tissue specificity">
    <text evidence="3">Expressed in aleurone cells.</text>
</comment>
<comment type="induction">
    <text evidence="3 4 6">Induced by abscisic acid in aleurone cells (PubMed:15618416). Induced by salicylic acid (SA) and infection with the rice blast fungus Magnaporthe oryzae (PubMed:16528562). Induced by cold stress (PubMed:21725029). Down-regulated by drought stress (PubMed:21725029).</text>
</comment>
<comment type="disruption phenotype">
    <text evidence="5">Enhanced susceptibility to the bacterial blight Xanthomonas oryzae pv oryzae (Xoo) and the bacterial streak Xanthomonas oryzae pv oryzicola (Xoc).</text>
</comment>
<comment type="miscellaneous">
    <text evidence="5">Plants overexpressing WRKY45 exhibit enhanced resistance to the rice blast fungus Magnaporthe oryzae, the bacterial blight Xanthomonas oryzae pv oryzae (Xoo), and the bacterial streak Xanthomonas oryzae pv oryzicola (Xoc) (PubMed:19700558). Enhanced resistance to bacterial pathogens is associated with increased accumulation of jasmonate (JA) (PubMed:19700558).</text>
</comment>
<comment type="similarity">
    <text evidence="9">Belongs to the WRKY group III family.</text>
</comment>
<comment type="caution">
    <text evidence="10 11">Rice plants contain two different alleles of WRKY45, WRKY45-1 (AC Q5W6D6) and WRKY45-2 (AC B8AWM1), which play similar and opposite roles in defense response, response to abscisic acid (ABA) and response to abiotic stresses.</text>
</comment>
<feature type="chain" id="PRO_0000453488" description="Transcription factor WRKY45-2">
    <location>
        <begin position="1"/>
        <end position="322"/>
    </location>
</feature>
<feature type="DNA-binding region" description="WRKY" evidence="1">
    <location>
        <begin position="112"/>
        <end position="180"/>
    </location>
</feature>
<feature type="region of interest" description="Disordered" evidence="2">
    <location>
        <begin position="67"/>
        <end position="110"/>
    </location>
</feature>
<feature type="region of interest" description="Disordered" evidence="2">
    <location>
        <begin position="256"/>
        <end position="284"/>
    </location>
</feature>
<protein>
    <recommendedName>
        <fullName evidence="8">Transcription factor WRKY45-2</fullName>
        <shortName evidence="8">OsWRKY45-2</shortName>
    </recommendedName>
    <alternativeName>
        <fullName evidence="7">OsWRKY45</fullName>
    </alternativeName>
    <alternativeName>
        <fullName evidence="8">WRKY transcription factor 45-2</fullName>
    </alternativeName>
</protein>
<name>WK452_ORYSI</name>
<keyword id="KW-0010">Activator</keyword>
<keyword id="KW-0238">DNA-binding</keyword>
<keyword id="KW-0539">Nucleus</keyword>
<keyword id="KW-0611">Plant defense</keyword>
<keyword id="KW-1185">Reference proteome</keyword>
<keyword id="KW-0346">Stress response</keyword>
<keyword id="KW-0804">Transcription</keyword>
<keyword id="KW-0805">Transcription regulation</keyword>
<gene>
    <name evidence="8" type="primary">WRKY45-2</name>
    <name evidence="7" type="synonym">WRKY45</name>
    <name evidence="12" type="ORF">OsI_19468</name>
</gene>
<evidence type="ECO:0000255" key="1">
    <source>
        <dbReference type="PROSITE-ProRule" id="PRU00223"/>
    </source>
</evidence>
<evidence type="ECO:0000256" key="2">
    <source>
        <dbReference type="SAM" id="MobiDB-lite"/>
    </source>
</evidence>
<evidence type="ECO:0000269" key="3">
    <source>
    </source>
</evidence>
<evidence type="ECO:0000269" key="4">
    <source>
    </source>
</evidence>
<evidence type="ECO:0000269" key="5">
    <source>
    </source>
</evidence>
<evidence type="ECO:0000269" key="6">
    <source>
    </source>
</evidence>
<evidence type="ECO:0000303" key="7">
    <source>
    </source>
</evidence>
<evidence type="ECO:0000303" key="8">
    <source>
    </source>
</evidence>
<evidence type="ECO:0000305" key="9"/>
<evidence type="ECO:0000305" key="10">
    <source>
    </source>
</evidence>
<evidence type="ECO:0000305" key="11">
    <source>
    </source>
</evidence>
<evidence type="ECO:0000312" key="12">
    <source>
        <dbReference type="EMBL" id="EEC78982.1"/>
    </source>
</evidence>
<reference key="1">
    <citation type="journal article" date="2009" name="Plant Physiol.">
        <title>A pair of allelic WRKY genes play opposite roles in rice-bacteria interactions.</title>
        <authorList>
            <person name="Tao Z."/>
            <person name="Liu H."/>
            <person name="Qiu D."/>
            <person name="Zhou Y."/>
            <person name="Li X."/>
            <person name="Xu C."/>
            <person name="Wang S."/>
        </authorList>
    </citation>
    <scope>NUCLEOTIDE SEQUENCE [GENOMIC DNA]</scope>
    <scope>FUNCTION</scope>
    <scope>DISRUPTION PHENOTYPE</scope>
</reference>
<reference key="2">
    <citation type="journal article" date="2005" name="PLoS Biol.">
        <title>The genomes of Oryza sativa: a history of duplications.</title>
        <authorList>
            <person name="Yu J."/>
            <person name="Wang J."/>
            <person name="Lin W."/>
            <person name="Li S."/>
            <person name="Li H."/>
            <person name="Zhou J."/>
            <person name="Ni P."/>
            <person name="Dong W."/>
            <person name="Hu S."/>
            <person name="Zeng C."/>
            <person name="Zhang J."/>
            <person name="Zhang Y."/>
            <person name="Li R."/>
            <person name="Xu Z."/>
            <person name="Li S."/>
            <person name="Li X."/>
            <person name="Zheng H."/>
            <person name="Cong L."/>
            <person name="Lin L."/>
            <person name="Yin J."/>
            <person name="Geng J."/>
            <person name="Li G."/>
            <person name="Shi J."/>
            <person name="Liu J."/>
            <person name="Lv H."/>
            <person name="Li J."/>
            <person name="Wang J."/>
            <person name="Deng Y."/>
            <person name="Ran L."/>
            <person name="Shi X."/>
            <person name="Wang X."/>
            <person name="Wu Q."/>
            <person name="Li C."/>
            <person name="Ren X."/>
            <person name="Wang J."/>
            <person name="Wang X."/>
            <person name="Li D."/>
            <person name="Liu D."/>
            <person name="Zhang X."/>
            <person name="Ji Z."/>
            <person name="Zhao W."/>
            <person name="Sun Y."/>
            <person name="Zhang Z."/>
            <person name="Bao J."/>
            <person name="Han Y."/>
            <person name="Dong L."/>
            <person name="Ji J."/>
            <person name="Chen P."/>
            <person name="Wu S."/>
            <person name="Liu J."/>
            <person name="Xiao Y."/>
            <person name="Bu D."/>
            <person name="Tan J."/>
            <person name="Yang L."/>
            <person name="Ye C."/>
            <person name="Zhang J."/>
            <person name="Xu J."/>
            <person name="Zhou Y."/>
            <person name="Yu Y."/>
            <person name="Zhang B."/>
            <person name="Zhuang S."/>
            <person name="Wei H."/>
            <person name="Liu B."/>
            <person name="Lei M."/>
            <person name="Yu H."/>
            <person name="Li Y."/>
            <person name="Xu H."/>
            <person name="Wei S."/>
            <person name="He X."/>
            <person name="Fang L."/>
            <person name="Zhang Z."/>
            <person name="Zhang Y."/>
            <person name="Huang X."/>
            <person name="Su Z."/>
            <person name="Tong W."/>
            <person name="Li J."/>
            <person name="Tong Z."/>
            <person name="Li S."/>
            <person name="Ye J."/>
            <person name="Wang L."/>
            <person name="Fang L."/>
            <person name="Lei T."/>
            <person name="Chen C.-S."/>
            <person name="Chen H.-C."/>
            <person name="Xu Z."/>
            <person name="Li H."/>
            <person name="Huang H."/>
            <person name="Zhang F."/>
            <person name="Xu H."/>
            <person name="Li N."/>
            <person name="Zhao C."/>
            <person name="Li S."/>
            <person name="Dong L."/>
            <person name="Huang Y."/>
            <person name="Li L."/>
            <person name="Xi Y."/>
            <person name="Qi Q."/>
            <person name="Li W."/>
            <person name="Zhang B."/>
            <person name="Hu W."/>
            <person name="Zhang Y."/>
            <person name="Tian X."/>
            <person name="Jiao Y."/>
            <person name="Liang X."/>
            <person name="Jin J."/>
            <person name="Gao L."/>
            <person name="Zheng W."/>
            <person name="Hao B."/>
            <person name="Liu S.-M."/>
            <person name="Wang W."/>
            <person name="Yuan L."/>
            <person name="Cao M."/>
            <person name="McDermott J."/>
            <person name="Samudrala R."/>
            <person name="Wang J."/>
            <person name="Wong G.K.-S."/>
            <person name="Yang H."/>
        </authorList>
    </citation>
    <scope>NUCLEOTIDE SEQUENCE [LARGE SCALE GENOMIC DNA]</scope>
    <source>
        <strain>cv. 93-11</strain>
    </source>
</reference>
<reference key="3">
    <citation type="journal article" date="2004" name="Plant Physiol.">
        <title>A rice WRKY gene encodes a transcriptional repressor of the gibberellin signaling pathway in aleurone cells.</title>
        <authorList>
            <person name="Zhang Z.-L."/>
            <person name="Xie Z."/>
            <person name="Zou X."/>
            <person name="Casaretto J."/>
            <person name="Ho T.-H.D."/>
            <person name="Shen Q.J."/>
        </authorList>
    </citation>
    <scope>NUCLEOTIDE SEQUENCE [GENOMIC DNA] OF 5-322</scope>
</reference>
<reference key="4">
    <citation type="journal article" date="2006" name="Plant Cell Rep.">
        <title>A comprehensive expression analysis of the WRKY gene superfamily in rice plants during defense response.</title>
        <authorList>
            <person name="Ryu H.-S."/>
            <person name="Han M."/>
            <person name="Lee S.-K."/>
            <person name="Cho J.-I."/>
            <person name="Ryoo N."/>
            <person name="Heu S."/>
            <person name="Lee Y.-H."/>
            <person name="Bhoo S.H."/>
            <person name="Wang G.-L."/>
            <person name="Hahn T.-R."/>
            <person name="Jeon J.-S."/>
        </authorList>
    </citation>
    <scope>NUCLEOTIDE SEQUENCE [MRNA] OF 5-322</scope>
    <scope>INDUCTION</scope>
</reference>
<reference key="5">
    <citation type="journal article" date="2005" name="Plant Physiol.">
        <title>Annotations and functional analyses of the rice WRKY gene superfamily reveal positive and negative regulators of abscisic acid signaling in aleurone cells.</title>
        <authorList>
            <person name="Xie Z."/>
            <person name="Zhang Z.-L."/>
            <person name="Zou X."/>
            <person name="Huang J."/>
            <person name="Ruas P."/>
            <person name="Thompson D."/>
            <person name="Shen Q.J."/>
        </authorList>
    </citation>
    <scope>TISSUE SPECIFICITY</scope>
    <scope>INDUCTION BY ABSCISIC ACID</scope>
</reference>
<reference key="6">
    <citation type="journal article" date="2011" name="J. Exp. Bot.">
        <title>OsWRKY45 alleles play different roles in abscisic acid signalling and salt stress tolerance but similar roles in drought and cold tolerance in rice.</title>
        <authorList>
            <person name="Tao Z."/>
            <person name="Kou Y."/>
            <person name="Liu H."/>
            <person name="Li X."/>
            <person name="Xiao J."/>
            <person name="Wang S."/>
        </authorList>
    </citation>
    <scope>FUNCTION</scope>
    <scope>INDUCTION</scope>
</reference>
<sequence length="322" mass="33815">MTSSMSPAPAPAYAQVMEDMEKGKELAAQLQGLLRDSPEAGRFVDQILHTFSRAMRALDKAAVSAAGGEGSEVQSEVTCGGGASAGGKRKAPAANRKANCRRRTQQSSGNTVVVKNLDDGQAWRKYGQKEIQNSKHPKAYFRCTHKYDQMCTAQRQVQRCDDDPASYRVTYIGEHTCRDPATAPIIAAHVIHQVAAGDDDDGCGGLHAGSRLISFVAAPAAPVDAAAAPTTSTITTVTAPGPLLQPLKVEGGIGSSDQEEVLSSLTPGSSAARGGGVAGPFGPDQGDVTSSLHWSYDAVAGMEFFKNDEVVFDLDDIMGLSF</sequence>
<accession>B8AWM1</accession>
<accession>Q20DP9</accession>
<accession>Q6IEN6</accession>
<organism>
    <name type="scientific">Oryza sativa subsp. indica</name>
    <name type="common">Rice</name>
    <dbReference type="NCBI Taxonomy" id="39946"/>
    <lineage>
        <taxon>Eukaryota</taxon>
        <taxon>Viridiplantae</taxon>
        <taxon>Streptophyta</taxon>
        <taxon>Embryophyta</taxon>
        <taxon>Tracheophyta</taxon>
        <taxon>Spermatophyta</taxon>
        <taxon>Magnoliopsida</taxon>
        <taxon>Liliopsida</taxon>
        <taxon>Poales</taxon>
        <taxon>Poaceae</taxon>
        <taxon>BOP clade</taxon>
        <taxon>Oryzoideae</taxon>
        <taxon>Oryzeae</taxon>
        <taxon>Oryzinae</taxon>
        <taxon>Oryza</taxon>
        <taxon>Oryza sativa</taxon>
    </lineage>
</organism>
<proteinExistence type="evidence at transcript level"/>